<organism>
    <name type="scientific">Agelena orientalis</name>
    <name type="common">Funnel-web spider</name>
    <dbReference type="NCBI Taxonomy" id="293813"/>
    <lineage>
        <taxon>Eukaryota</taxon>
        <taxon>Metazoa</taxon>
        <taxon>Ecdysozoa</taxon>
        <taxon>Arthropoda</taxon>
        <taxon>Chelicerata</taxon>
        <taxon>Arachnida</taxon>
        <taxon>Araneae</taxon>
        <taxon>Araneomorphae</taxon>
        <taxon>Entelegynae</taxon>
        <taxon>Agelenidae</taxon>
        <taxon>Agelena</taxon>
    </lineage>
</organism>
<feature type="signal peptide" evidence="2">
    <location>
        <begin position="1"/>
        <end position="20"/>
    </location>
</feature>
<feature type="propeptide" id="PRO_5000093607" evidence="2">
    <location>
        <begin position="21"/>
        <end position="34"/>
    </location>
</feature>
<feature type="chain" id="PRO_5000093608" description="U2-agatoxin-Ao1c">
    <location>
        <begin position="35"/>
        <end position="68"/>
    </location>
</feature>
<feature type="modified residue" description="Leucine amide" evidence="1">
    <location>
        <position position="68"/>
    </location>
</feature>
<feature type="disulfide bond" evidence="1">
    <location>
        <begin position="36"/>
        <end position="52"/>
    </location>
</feature>
<feature type="disulfide bond" evidence="1">
    <location>
        <begin position="43"/>
        <end position="57"/>
    </location>
</feature>
<feature type="disulfide bond" evidence="1">
    <location>
        <begin position="51"/>
        <end position="67"/>
    </location>
</feature>
<dbReference type="EMBL" id="AY681299">
    <property type="protein sequence ID" value="AAU93657.1"/>
    <property type="molecule type" value="mRNA"/>
</dbReference>
<dbReference type="SMR" id="Q5Y4Y3"/>
<dbReference type="ArachnoServer" id="AS000111">
    <property type="toxin name" value="U2-agatoxin-Ao1c"/>
</dbReference>
<dbReference type="GO" id="GO:0005576">
    <property type="term" value="C:extracellular region"/>
    <property type="evidence" value="ECO:0007669"/>
    <property type="project" value="UniProtKB-SubCell"/>
</dbReference>
<dbReference type="GO" id="GO:0090729">
    <property type="term" value="F:toxin activity"/>
    <property type="evidence" value="ECO:0007669"/>
    <property type="project" value="UniProtKB-KW"/>
</dbReference>
<dbReference type="Pfam" id="PF05980">
    <property type="entry name" value="Toxin_7"/>
    <property type="match status" value="1"/>
</dbReference>
<dbReference type="SUPFAM" id="SSF57059">
    <property type="entry name" value="omega toxin-like"/>
    <property type="match status" value="1"/>
</dbReference>
<keyword id="KW-0027">Amidation</keyword>
<keyword id="KW-1015">Disulfide bond</keyword>
<keyword id="KW-0960">Knottin</keyword>
<keyword id="KW-0528">Neurotoxin</keyword>
<keyword id="KW-0964">Secreted</keyword>
<keyword id="KW-0732">Signal</keyword>
<keyword id="KW-0800">Toxin</keyword>
<evidence type="ECO:0000250" key="1"/>
<evidence type="ECO:0000255" key="2"/>
<evidence type="ECO:0000305" key="3"/>
<proteinExistence type="evidence at transcript level"/>
<protein>
    <recommendedName>
        <fullName>U2-agatoxin-Ao1c</fullName>
        <shortName>U2-AGTX-Ao1c</shortName>
    </recommendedName>
    <alternativeName>
        <fullName>Toxin-like structure Agel_02</fullName>
    </alternativeName>
</protein>
<reference key="1">
    <citation type="journal article" date="2005" name="Proteins">
        <title>A novel strategy for the identification of toxinlike structures in spider venom.</title>
        <authorList>
            <person name="Kozlov S.A."/>
            <person name="Malyavka A."/>
            <person name="McCutchen B."/>
            <person name="Lu A."/>
            <person name="Schepers E."/>
            <person name="Herrmann R."/>
            <person name="Grishin E.V."/>
        </authorList>
    </citation>
    <scope>NUCLEOTIDE SEQUENCE [MRNA]</scope>
    <source>
        <tissue>Venom gland</tissue>
    </source>
</reference>
<name>TAG2C_AGEOR</name>
<comment type="function">
    <text evidence="1">Insect active toxin causing rapid but reversible paralysis in crickets. No activity shown in mammals. Does not show effect on mammalian voltage-gated calcium channels (By similarity).</text>
</comment>
<comment type="subcellular location">
    <subcellularLocation>
        <location evidence="1">Secreted</location>
    </subcellularLocation>
</comment>
<comment type="tissue specificity">
    <text>Expressed by the venom gland.</text>
</comment>
<comment type="domain">
    <text evidence="1">The presence of a 'disulfide through disulfide knot' structurally defines this protein as a knottin.</text>
</comment>
<comment type="similarity">
    <text evidence="3">Belongs to the neurotoxin 01 (U2-agtx) family.</text>
</comment>
<accession>Q5Y4Y3</accession>
<sequence>MKAIISLLLISAMVFSMIEAVPVEEGLQLFEGERGCLPHNRFCNALSGPRCCSGLKCKELSIWDSRCLG</sequence>